<organism>
    <name type="scientific">Pyrenomonas salina</name>
    <dbReference type="NCBI Taxonomy" id="3034"/>
    <lineage>
        <taxon>Eukaryota</taxon>
        <taxon>Cryptophyceae</taxon>
        <taxon>Pyrenomonadales</taxon>
        <taxon>Pyrenomonadaceae</taxon>
        <taxon>Pyrenomonas</taxon>
    </lineage>
</organism>
<evidence type="ECO:0000256" key="1">
    <source>
        <dbReference type="SAM" id="MobiDB-lite"/>
    </source>
</evidence>
<evidence type="ECO:0000305" key="2"/>
<comment type="similarity">
    <text evidence="2">Belongs to the heat shock protein 70 family.</text>
</comment>
<keyword id="KW-0067">ATP-binding</keyword>
<keyword id="KW-0547">Nucleotide-binding</keyword>
<keyword id="KW-0346">Stress response</keyword>
<accession>P37899</accession>
<feature type="chain" id="PRO_0000078313" description="Heat shock 70 kDa protein">
    <location>
        <begin position="1"/>
        <end position="649"/>
    </location>
</feature>
<feature type="region of interest" description="Disordered" evidence="1">
    <location>
        <begin position="620"/>
        <end position="649"/>
    </location>
</feature>
<feature type="compositionally biased region" description="Polar residues" evidence="1">
    <location>
        <begin position="620"/>
        <end position="633"/>
    </location>
</feature>
<sequence length="649" mass="72080">MENKIEGVAIGIDLGTTYSCVGVWLHDRVEVIANDQGNRTTPSYVAFTETERLIGDSAKNQVAMNPDNTVFDAKRLIGRRFQDPAVQEDVKPFPFKVICKDGDKPAVEVKYKGETKIFAPEEISSMVLLKMKEIAESFLGKEVKNAVITVPAYFNDSQRQATKDAGAITGLNVLRIINEPTAAAIAYGLDKKTSGSKSERNVLIFDLGGGTFDVSLLTIEEGIFEVKATAGDTHLGGEDFDSRLVNFFVSEFKRKYKKDVTSNARSLRRLRTACERAKRTLSSGTQTTVEIDSLIDGIDYYASITRAKFEELCMDLFRGTSEPVEKVLRDSKISKSEIHDVVLVGGSTRIPKVQQLLIDYFNGKELCKNINPDEAVAYGAAVQAAILAGDTSEKMDLLLLDVSPLSLGLETAGGVMTVLIKRNTTIPTKKTQVFSTYADNQPGVLIQVFEGERSRTKDNNILGKFELTGIPPAPRGVPQIEVTFDIDANGILNVSASDKSTGKSNKITITNDKGRLSKEEIERMVEEAEKYKTEDEKLDKKLEAKNSLENYAYNIRNTVRDEKLKEKIQEEDKKSIEEKVKEVLEFIETNEDLEKEEYEEKEKELKNFANPIISKLYQQGSVPDMGNFSTGQNEQDDNANMGPKIEEVG</sequence>
<reference key="1">
    <citation type="journal article" date="1994" name="Mol. Gen. Genet.">
        <title>The smallest known eukaryotic genomes encode a protein gene: towards an understanding of nucleomorph functions.</title>
        <authorList>
            <person name="Hofmann C.J.B."/>
            <person name="Rensing S.A."/>
            <person name="Haeuber M.M."/>
            <person name="Martin W.F."/>
            <person name="Mueller S.B."/>
            <person name="Couch J."/>
            <person name="McFadden G.I."/>
            <person name="Igloi G.L."/>
            <person name="Maier U.-G."/>
        </authorList>
    </citation>
    <scope>NUCLEOTIDE SEQUENCE [GENOMIC DNA]</scope>
</reference>
<dbReference type="EMBL" id="X72621">
    <property type="protein sequence ID" value="CAA51197.1"/>
    <property type="molecule type" value="Genomic_DNA"/>
</dbReference>
<dbReference type="PIR" id="S42488">
    <property type="entry name" value="S42488"/>
</dbReference>
<dbReference type="SMR" id="P37899"/>
<dbReference type="GO" id="GO:0005524">
    <property type="term" value="F:ATP binding"/>
    <property type="evidence" value="ECO:0007669"/>
    <property type="project" value="UniProtKB-KW"/>
</dbReference>
<dbReference type="GO" id="GO:0140662">
    <property type="term" value="F:ATP-dependent protein folding chaperone"/>
    <property type="evidence" value="ECO:0007669"/>
    <property type="project" value="InterPro"/>
</dbReference>
<dbReference type="CDD" id="cd10233">
    <property type="entry name" value="ASKHA_NBD_HSP70_HSPA1"/>
    <property type="match status" value="1"/>
</dbReference>
<dbReference type="FunFam" id="2.60.34.10:FF:000002">
    <property type="entry name" value="Heat shock 70 kDa"/>
    <property type="match status" value="1"/>
</dbReference>
<dbReference type="FunFam" id="3.90.640.10:FF:000002">
    <property type="entry name" value="Heat shock 70 kDa"/>
    <property type="match status" value="1"/>
</dbReference>
<dbReference type="FunFam" id="3.30.420.40:FF:000172">
    <property type="entry name" value="Heat shock 70 kDa protein"/>
    <property type="match status" value="2"/>
</dbReference>
<dbReference type="FunFam" id="3.30.30.30:FF:000001">
    <property type="entry name" value="heat shock 70 kDa protein-like"/>
    <property type="match status" value="1"/>
</dbReference>
<dbReference type="FunFam" id="3.30.420.40:FF:000026">
    <property type="entry name" value="Heat shock protein 70"/>
    <property type="match status" value="1"/>
</dbReference>
<dbReference type="Gene3D" id="1.20.1270.10">
    <property type="match status" value="1"/>
</dbReference>
<dbReference type="Gene3D" id="3.30.30.30">
    <property type="match status" value="1"/>
</dbReference>
<dbReference type="Gene3D" id="3.30.420.40">
    <property type="match status" value="2"/>
</dbReference>
<dbReference type="Gene3D" id="3.90.640.10">
    <property type="entry name" value="Actin, Chain A, domain 4"/>
    <property type="match status" value="1"/>
</dbReference>
<dbReference type="Gene3D" id="2.60.34.10">
    <property type="entry name" value="Substrate Binding Domain Of DNAk, Chain A, domain 1"/>
    <property type="match status" value="1"/>
</dbReference>
<dbReference type="InterPro" id="IPR043129">
    <property type="entry name" value="ATPase_NBD"/>
</dbReference>
<dbReference type="InterPro" id="IPR018181">
    <property type="entry name" value="Heat_shock_70_CS"/>
</dbReference>
<dbReference type="InterPro" id="IPR029048">
    <property type="entry name" value="HSP70_C_sf"/>
</dbReference>
<dbReference type="InterPro" id="IPR029047">
    <property type="entry name" value="HSP70_peptide-bd_sf"/>
</dbReference>
<dbReference type="InterPro" id="IPR013126">
    <property type="entry name" value="Hsp_70_fam"/>
</dbReference>
<dbReference type="NCBIfam" id="NF001413">
    <property type="entry name" value="PRK00290.1"/>
    <property type="match status" value="1"/>
</dbReference>
<dbReference type="PANTHER" id="PTHR19375">
    <property type="entry name" value="HEAT SHOCK PROTEIN 70KDA"/>
    <property type="match status" value="1"/>
</dbReference>
<dbReference type="Pfam" id="PF00012">
    <property type="entry name" value="HSP70"/>
    <property type="match status" value="1"/>
</dbReference>
<dbReference type="PRINTS" id="PR00301">
    <property type="entry name" value="HEATSHOCK70"/>
</dbReference>
<dbReference type="SUPFAM" id="SSF53067">
    <property type="entry name" value="Actin-like ATPase domain"/>
    <property type="match status" value="2"/>
</dbReference>
<dbReference type="SUPFAM" id="SSF100934">
    <property type="entry name" value="Heat shock protein 70kD (HSP70), C-terminal subdomain"/>
    <property type="match status" value="1"/>
</dbReference>
<dbReference type="SUPFAM" id="SSF100920">
    <property type="entry name" value="Heat shock protein 70kD (HSP70), peptide-binding domain"/>
    <property type="match status" value="1"/>
</dbReference>
<dbReference type="PROSITE" id="PS00297">
    <property type="entry name" value="HSP70_1"/>
    <property type="match status" value="1"/>
</dbReference>
<dbReference type="PROSITE" id="PS00329">
    <property type="entry name" value="HSP70_2"/>
    <property type="match status" value="1"/>
</dbReference>
<dbReference type="PROSITE" id="PS01036">
    <property type="entry name" value="HSP70_3"/>
    <property type="match status" value="1"/>
</dbReference>
<geneLocation type="nucleomorph"/>
<proteinExistence type="inferred from homology"/>
<gene>
    <name type="primary">HSP70</name>
</gene>
<name>HSP70_PYRSA</name>
<protein>
    <recommendedName>
        <fullName>Heat shock 70 kDa protein</fullName>
    </recommendedName>
</protein>